<keyword id="KW-0963">Cytoplasm</keyword>
<keyword id="KW-0378">Hydrolase</keyword>
<keyword id="KW-0479">Metal-binding</keyword>
<keyword id="KW-0547">Nucleotide-binding</keyword>
<comment type="function">
    <text evidence="1">Nucleotidase that shows phosphatase activity on nucleoside 5'-monophosphates.</text>
</comment>
<comment type="catalytic activity">
    <reaction evidence="1">
        <text>a ribonucleoside 5'-phosphate + H2O = a ribonucleoside + phosphate</text>
        <dbReference type="Rhea" id="RHEA:12484"/>
        <dbReference type="ChEBI" id="CHEBI:15377"/>
        <dbReference type="ChEBI" id="CHEBI:18254"/>
        <dbReference type="ChEBI" id="CHEBI:43474"/>
        <dbReference type="ChEBI" id="CHEBI:58043"/>
        <dbReference type="EC" id="3.1.3.5"/>
    </reaction>
</comment>
<comment type="cofactor">
    <cofactor evidence="1">
        <name>a divalent metal cation</name>
        <dbReference type="ChEBI" id="CHEBI:60240"/>
    </cofactor>
    <text evidence="1">Binds 1 divalent metal cation per subunit.</text>
</comment>
<comment type="subcellular location">
    <subcellularLocation>
        <location evidence="1">Cytoplasm</location>
    </subcellularLocation>
</comment>
<comment type="similarity">
    <text evidence="1">Belongs to the SurE nucleotidase family.</text>
</comment>
<evidence type="ECO:0000255" key="1">
    <source>
        <dbReference type="HAMAP-Rule" id="MF_00060"/>
    </source>
</evidence>
<gene>
    <name evidence="1" type="primary">surE</name>
    <name type="ordered locus">Pfl01_1129</name>
</gene>
<dbReference type="EC" id="3.1.3.5" evidence="1"/>
<dbReference type="EMBL" id="CP000094">
    <property type="protein sequence ID" value="ABA72872.1"/>
    <property type="molecule type" value="Genomic_DNA"/>
</dbReference>
<dbReference type="RefSeq" id="WP_011332703.1">
    <property type="nucleotide sequence ID" value="NC_007492.2"/>
</dbReference>
<dbReference type="SMR" id="Q3KH84"/>
<dbReference type="KEGG" id="pfo:Pfl01_1129"/>
<dbReference type="eggNOG" id="COG0496">
    <property type="taxonomic scope" value="Bacteria"/>
</dbReference>
<dbReference type="HOGENOM" id="CLU_045192_1_2_6"/>
<dbReference type="Proteomes" id="UP000002704">
    <property type="component" value="Chromosome"/>
</dbReference>
<dbReference type="GO" id="GO:0005737">
    <property type="term" value="C:cytoplasm"/>
    <property type="evidence" value="ECO:0007669"/>
    <property type="project" value="UniProtKB-SubCell"/>
</dbReference>
<dbReference type="GO" id="GO:0008254">
    <property type="term" value="F:3'-nucleotidase activity"/>
    <property type="evidence" value="ECO:0007669"/>
    <property type="project" value="TreeGrafter"/>
</dbReference>
<dbReference type="GO" id="GO:0008253">
    <property type="term" value="F:5'-nucleotidase activity"/>
    <property type="evidence" value="ECO:0007669"/>
    <property type="project" value="UniProtKB-UniRule"/>
</dbReference>
<dbReference type="GO" id="GO:0004309">
    <property type="term" value="F:exopolyphosphatase activity"/>
    <property type="evidence" value="ECO:0007669"/>
    <property type="project" value="TreeGrafter"/>
</dbReference>
<dbReference type="GO" id="GO:0046872">
    <property type="term" value="F:metal ion binding"/>
    <property type="evidence" value="ECO:0007669"/>
    <property type="project" value="UniProtKB-UniRule"/>
</dbReference>
<dbReference type="GO" id="GO:0000166">
    <property type="term" value="F:nucleotide binding"/>
    <property type="evidence" value="ECO:0007669"/>
    <property type="project" value="UniProtKB-KW"/>
</dbReference>
<dbReference type="FunFam" id="3.40.1210.10:FF:000001">
    <property type="entry name" value="5'/3'-nucleotidase SurE"/>
    <property type="match status" value="1"/>
</dbReference>
<dbReference type="Gene3D" id="3.40.1210.10">
    <property type="entry name" value="Survival protein SurE-like phosphatase/nucleotidase"/>
    <property type="match status" value="1"/>
</dbReference>
<dbReference type="HAMAP" id="MF_00060">
    <property type="entry name" value="SurE"/>
    <property type="match status" value="1"/>
</dbReference>
<dbReference type="InterPro" id="IPR030048">
    <property type="entry name" value="SurE"/>
</dbReference>
<dbReference type="InterPro" id="IPR002828">
    <property type="entry name" value="SurE-like_Pase/nucleotidase"/>
</dbReference>
<dbReference type="InterPro" id="IPR036523">
    <property type="entry name" value="SurE-like_sf"/>
</dbReference>
<dbReference type="NCBIfam" id="NF001489">
    <property type="entry name" value="PRK00346.1-3"/>
    <property type="match status" value="1"/>
</dbReference>
<dbReference type="NCBIfam" id="NF001490">
    <property type="entry name" value="PRK00346.1-4"/>
    <property type="match status" value="1"/>
</dbReference>
<dbReference type="NCBIfam" id="TIGR00087">
    <property type="entry name" value="surE"/>
    <property type="match status" value="1"/>
</dbReference>
<dbReference type="PANTHER" id="PTHR30457">
    <property type="entry name" value="5'-NUCLEOTIDASE SURE"/>
    <property type="match status" value="1"/>
</dbReference>
<dbReference type="PANTHER" id="PTHR30457:SF12">
    <property type="entry name" value="5'_3'-NUCLEOTIDASE SURE"/>
    <property type="match status" value="1"/>
</dbReference>
<dbReference type="Pfam" id="PF01975">
    <property type="entry name" value="SurE"/>
    <property type="match status" value="1"/>
</dbReference>
<dbReference type="SUPFAM" id="SSF64167">
    <property type="entry name" value="SurE-like"/>
    <property type="match status" value="1"/>
</dbReference>
<protein>
    <recommendedName>
        <fullName evidence="1">5'-nucleotidase SurE</fullName>
        <ecNumber evidence="1">3.1.3.5</ecNumber>
    </recommendedName>
    <alternativeName>
        <fullName evidence="1">Nucleoside 5'-monophosphate phosphohydrolase</fullName>
    </alternativeName>
</protein>
<proteinExistence type="inferred from homology"/>
<reference key="1">
    <citation type="journal article" date="2009" name="Genome Biol.">
        <title>Genomic and genetic analyses of diversity and plant interactions of Pseudomonas fluorescens.</title>
        <authorList>
            <person name="Silby M.W."/>
            <person name="Cerdeno-Tarraga A.M."/>
            <person name="Vernikos G.S."/>
            <person name="Giddens S.R."/>
            <person name="Jackson R.W."/>
            <person name="Preston G.M."/>
            <person name="Zhang X.-X."/>
            <person name="Moon C.D."/>
            <person name="Gehrig S.M."/>
            <person name="Godfrey S.A.C."/>
            <person name="Knight C.G."/>
            <person name="Malone J.G."/>
            <person name="Robinson Z."/>
            <person name="Spiers A.J."/>
            <person name="Harris S."/>
            <person name="Challis G.L."/>
            <person name="Yaxley A.M."/>
            <person name="Harris D."/>
            <person name="Seeger K."/>
            <person name="Murphy L."/>
            <person name="Rutter S."/>
            <person name="Squares R."/>
            <person name="Quail M.A."/>
            <person name="Saunders E."/>
            <person name="Mavromatis K."/>
            <person name="Brettin T.S."/>
            <person name="Bentley S.D."/>
            <person name="Hothersall J."/>
            <person name="Stephens E."/>
            <person name="Thomas C.M."/>
            <person name="Parkhill J."/>
            <person name="Levy S.B."/>
            <person name="Rainey P.B."/>
            <person name="Thomson N.R."/>
        </authorList>
    </citation>
    <scope>NUCLEOTIDE SEQUENCE [LARGE SCALE GENOMIC DNA]</scope>
    <source>
        <strain>Pf0-1</strain>
    </source>
</reference>
<organism>
    <name type="scientific">Pseudomonas fluorescens (strain Pf0-1)</name>
    <dbReference type="NCBI Taxonomy" id="205922"/>
    <lineage>
        <taxon>Bacteria</taxon>
        <taxon>Pseudomonadati</taxon>
        <taxon>Pseudomonadota</taxon>
        <taxon>Gammaproteobacteria</taxon>
        <taxon>Pseudomonadales</taxon>
        <taxon>Pseudomonadaceae</taxon>
        <taxon>Pseudomonas</taxon>
    </lineage>
</organism>
<feature type="chain" id="PRO_0000235639" description="5'-nucleotidase SurE">
    <location>
        <begin position="1"/>
        <end position="249"/>
    </location>
</feature>
<feature type="binding site" evidence="1">
    <location>
        <position position="8"/>
    </location>
    <ligand>
        <name>a divalent metal cation</name>
        <dbReference type="ChEBI" id="CHEBI:60240"/>
    </ligand>
</feature>
<feature type="binding site" evidence="1">
    <location>
        <position position="9"/>
    </location>
    <ligand>
        <name>a divalent metal cation</name>
        <dbReference type="ChEBI" id="CHEBI:60240"/>
    </ligand>
</feature>
<feature type="binding site" evidence="1">
    <location>
        <position position="39"/>
    </location>
    <ligand>
        <name>a divalent metal cation</name>
        <dbReference type="ChEBI" id="CHEBI:60240"/>
    </ligand>
</feature>
<feature type="binding site" evidence="1">
    <location>
        <position position="91"/>
    </location>
    <ligand>
        <name>a divalent metal cation</name>
        <dbReference type="ChEBI" id="CHEBI:60240"/>
    </ligand>
</feature>
<accession>Q3KH84</accession>
<name>SURE_PSEPF</name>
<sequence length="249" mass="26557">MRILISNDDGVTAPGLAALYAALADYTECVVIAPEQDKSGASSSLTLDRPLHPQYLANGFISLNGTPTDCVHLGLNGLLEREPDMVVSGINLGANLGDDVLYSGTVAAALEGRFLKRPSFAFSLVSRQVDNLPTAAYFARKLVEAHAGLDLPPRTVLNVNIPNLPIDHIRGIQLTRLGHRARAAAPMKVVDPRGKAGYWIAAAGDAEDGGPGTDFHAVMQGYVSITPLQLDRTFNDAFRSLDGWLEGLN</sequence>